<feature type="chain" id="PRO_0000133216" description="Regulatory protein E2">
    <location>
        <begin position="1"/>
        <end position="509"/>
    </location>
</feature>
<feature type="region of interest" description="Transactivation domain" evidence="1">
    <location>
        <begin position="1"/>
        <end position="200"/>
    </location>
</feature>
<feature type="region of interest" description="Disordered" evidence="2">
    <location>
        <begin position="197"/>
        <end position="413"/>
    </location>
</feature>
<feature type="region of interest" description="DNA-binding domain" evidence="1">
    <location>
        <begin position="425"/>
        <end position="509"/>
    </location>
</feature>
<feature type="compositionally biased region" description="Low complexity" evidence="2">
    <location>
        <begin position="211"/>
        <end position="231"/>
    </location>
</feature>
<feature type="compositionally biased region" description="Polar residues" evidence="2">
    <location>
        <begin position="232"/>
        <end position="243"/>
    </location>
</feature>
<feature type="compositionally biased region" description="Basic residues" evidence="2">
    <location>
        <begin position="247"/>
        <end position="282"/>
    </location>
</feature>
<feature type="compositionally biased region" description="Low complexity" evidence="2">
    <location>
        <begin position="283"/>
        <end position="310"/>
    </location>
</feature>
<feature type="compositionally biased region" description="Basic residues" evidence="2">
    <location>
        <begin position="311"/>
        <end position="329"/>
    </location>
</feature>
<feature type="compositionally biased region" description="Low complexity" evidence="2">
    <location>
        <begin position="330"/>
        <end position="341"/>
    </location>
</feature>
<feature type="compositionally biased region" description="Gly residues" evidence="2">
    <location>
        <begin position="355"/>
        <end position="368"/>
    </location>
</feature>
<protein>
    <recommendedName>
        <fullName evidence="1">Regulatory protein E2</fullName>
    </recommendedName>
</protein>
<reference key="1">
    <citation type="submission" date="1995-10" db="EMBL/GenBank/DDBJ databases">
        <authorList>
            <person name="Delius H."/>
        </authorList>
    </citation>
    <scope>NUCLEOTIDE SEQUENCE [GENOMIC DNA]</scope>
</reference>
<organism>
    <name type="scientific">Human papillomavirus 36</name>
    <dbReference type="NCBI Taxonomy" id="37957"/>
    <lineage>
        <taxon>Viruses</taxon>
        <taxon>Monodnaviria</taxon>
        <taxon>Shotokuvirae</taxon>
        <taxon>Cossaviricota</taxon>
        <taxon>Papovaviricetes</taxon>
        <taxon>Zurhausenvirales</taxon>
        <taxon>Papillomaviridae</taxon>
        <taxon>Firstpapillomavirinae</taxon>
        <taxon>Betapapillomavirus</taxon>
        <taxon>Betapapillomavirus 1</taxon>
    </lineage>
</organism>
<comment type="function">
    <text evidence="1">Plays a role in the initiation of viral DNA replication. A dimer of E2 interacts with a dimer of E1 in order to improve specificity of E1 DNA binding activity. Once the complex recognizes and binds DNA at specific sites, the E2 dimer is removed from DNA. E2 also regulates viral transcription through binding to the E2RE response element (5'-ACCNNNNNNGGT-3') present in multiple copies in the regulatory regions of the viral genome. Activates or represses transcription depending on E2RE's position with regards to proximal promoter elements including the TATA-box. Repression occurs by sterically hindering the assembly of the transcription initiation complex.</text>
</comment>
<comment type="subunit">
    <text evidence="1">Binds DNA as homodimer. Interacts with protein E1; this interaction greatly increases E1 DNA-binding activity. Interacts with protein L1; this interaction enhances E2-dependent replication and transcription activation. Interacts with protein L2; this interaction inhibits E2 transcriptional activity but not DNA replication function E2. Interacts with protein E7; this interaction inhibits E7 oncogenic activity. Interacts with host TAF1; this interaction modulates E2-dependent transcriptional regulation. Interacts with host BRD4; this interaction mediates E2 transcriptional activation function. Additionally, the interaction with host BRD4 on mitotic chromosomes mediates tethering of the viral genome. Interacts with host TOPBP1; this interaction is required for optimal viral DNA replication.</text>
</comment>
<comment type="subcellular location">
    <subcellularLocation>
        <location evidence="1">Host nucleus</location>
    </subcellularLocation>
</comment>
<comment type="PTM">
    <text evidence="1">Phosphorylated.</text>
</comment>
<comment type="similarity">
    <text evidence="1">Belongs to the papillomaviridae E2 protein family.</text>
</comment>
<sequence length="509" mass="57187">MENLSERFNALQDLLMNIYEAAEQTLEAQIKHWQTLRQEAVLLYFARQRGVTRLGYQPVPVKAVSEAKAKEAIAMVLQLQSLQTSEYASETWTLVDTSIETFRSAPDGHFKKGPVPVEVIYDNDADNANLYTMWTYVYYMEDDVWHKARSGVNETGIYYLQGTFKYYYVLFADDARKYSQTGQWEVKVNKETVFAPVTSSTPPGSPGGQADTNASSKTSTTTTATVDSTTKQLTTSEQPQQTETKGRKYGRRPSSRTRRPQAKQRRSRSRHRSSRSRSRSQSRSHTPTTRSATTRSRSPSLAKTGVQRVSTRSRSRSTSRRGGRRRRSRSPSTSSSTTTTNKRSRVRAETTGSRGARGGRGARGGSGGGRRRGRSSSSTSPAHKRSREHSVRSRGVSPDQVGKSLRSVSSKHTGRLGRLLEEALDPPVILVRGEANTLKCFRNRAKIKYMGLYRSFSTTWSWVAGDGTERLGRPRMLISFSSYNQRRDFDDVVRYPKGVEKSYGNLDSL</sequence>
<evidence type="ECO:0000255" key="1">
    <source>
        <dbReference type="HAMAP-Rule" id="MF_04001"/>
    </source>
</evidence>
<evidence type="ECO:0000256" key="2">
    <source>
        <dbReference type="SAM" id="MobiDB-lite"/>
    </source>
</evidence>
<proteinExistence type="inferred from homology"/>
<name>VE2_HPV36</name>
<gene>
    <name evidence="1" type="primary">E2</name>
</gene>
<accession>P50809</accession>
<keyword id="KW-0010">Activator</keyword>
<keyword id="KW-0235">DNA replication</keyword>
<keyword id="KW-0238">DNA-binding</keyword>
<keyword id="KW-0244">Early protein</keyword>
<keyword id="KW-1048">Host nucleus</keyword>
<keyword id="KW-0597">Phosphoprotein</keyword>
<keyword id="KW-0678">Repressor</keyword>
<keyword id="KW-0804">Transcription</keyword>
<keyword id="KW-0805">Transcription regulation</keyword>
<dbReference type="EMBL" id="U31785">
    <property type="protein sequence ID" value="AAA79439.1"/>
    <property type="molecule type" value="Genomic_DNA"/>
</dbReference>
<dbReference type="SMR" id="P50809"/>
<dbReference type="Proteomes" id="UP000009167">
    <property type="component" value="Genome"/>
</dbReference>
<dbReference type="GO" id="GO:0042025">
    <property type="term" value="C:host cell nucleus"/>
    <property type="evidence" value="ECO:0007669"/>
    <property type="project" value="UniProtKB-SubCell"/>
</dbReference>
<dbReference type="GO" id="GO:0003677">
    <property type="term" value="F:DNA binding"/>
    <property type="evidence" value="ECO:0007669"/>
    <property type="project" value="UniProtKB-UniRule"/>
</dbReference>
<dbReference type="GO" id="GO:0003700">
    <property type="term" value="F:DNA-binding transcription factor activity"/>
    <property type="evidence" value="ECO:0007669"/>
    <property type="project" value="UniProtKB-UniRule"/>
</dbReference>
<dbReference type="GO" id="GO:0000166">
    <property type="term" value="F:nucleotide binding"/>
    <property type="evidence" value="ECO:0007669"/>
    <property type="project" value="UniProtKB-UniRule"/>
</dbReference>
<dbReference type="GO" id="GO:0006260">
    <property type="term" value="P:DNA replication"/>
    <property type="evidence" value="ECO:0007669"/>
    <property type="project" value="UniProtKB-KW"/>
</dbReference>
<dbReference type="GO" id="GO:0006351">
    <property type="term" value="P:DNA-templated transcription"/>
    <property type="evidence" value="ECO:0007669"/>
    <property type="project" value="UniProtKB-UniRule"/>
</dbReference>
<dbReference type="GO" id="GO:0006275">
    <property type="term" value="P:regulation of DNA replication"/>
    <property type="evidence" value="ECO:0007669"/>
    <property type="project" value="UniProtKB-UniRule"/>
</dbReference>
<dbReference type="GO" id="GO:0039693">
    <property type="term" value="P:viral DNA genome replication"/>
    <property type="evidence" value="ECO:0007669"/>
    <property type="project" value="UniProtKB-UniRule"/>
</dbReference>
<dbReference type="Gene3D" id="3.30.70.330">
    <property type="match status" value="1"/>
</dbReference>
<dbReference type="Gene3D" id="1.10.287.30">
    <property type="entry name" value="E2 (early) protein, N terminal domain, subdomain 1"/>
    <property type="match status" value="1"/>
</dbReference>
<dbReference type="Gene3D" id="2.170.200.10">
    <property type="entry name" value="Papillomavirus E2 early protein domain"/>
    <property type="match status" value="1"/>
</dbReference>
<dbReference type="HAMAP" id="MF_04001">
    <property type="entry name" value="PPV_E2"/>
    <property type="match status" value="1"/>
</dbReference>
<dbReference type="InterPro" id="IPR035975">
    <property type="entry name" value="E2/EBNA1_C_sf"/>
</dbReference>
<dbReference type="InterPro" id="IPR012677">
    <property type="entry name" value="Nucleotide-bd_a/b_plait_sf"/>
</dbReference>
<dbReference type="InterPro" id="IPR000427">
    <property type="entry name" value="Papillomavirus_E2_C"/>
</dbReference>
<dbReference type="InterPro" id="IPR001866">
    <property type="entry name" value="PPV_E2_N"/>
</dbReference>
<dbReference type="InterPro" id="IPR033668">
    <property type="entry name" value="Reg_prot_E2"/>
</dbReference>
<dbReference type="InterPro" id="IPR036050">
    <property type="entry name" value="Regulatory_protein_E2_N"/>
</dbReference>
<dbReference type="InterPro" id="IPR042503">
    <property type="entry name" value="Regulatory_protein_E2_N_1"/>
</dbReference>
<dbReference type="InterPro" id="IPR042504">
    <property type="entry name" value="Regulatory_protein_E2_N_2"/>
</dbReference>
<dbReference type="Pfam" id="PF00511">
    <property type="entry name" value="PPV_E2_C"/>
    <property type="match status" value="1"/>
</dbReference>
<dbReference type="Pfam" id="PF00508">
    <property type="entry name" value="PPV_E2_N"/>
    <property type="match status" value="1"/>
</dbReference>
<dbReference type="SUPFAM" id="SSF51332">
    <property type="entry name" value="E2 regulatory, transactivation domain"/>
    <property type="match status" value="1"/>
</dbReference>
<dbReference type="SUPFAM" id="SSF54957">
    <property type="entry name" value="Viral DNA-binding domain"/>
    <property type="match status" value="1"/>
</dbReference>
<organismHost>
    <name type="scientific">Homo sapiens</name>
    <name type="common">Human</name>
    <dbReference type="NCBI Taxonomy" id="9606"/>
</organismHost>